<accession>A8GQC9</accession>
<keyword id="KW-0963">Cytoplasm</keyword>
<keyword id="KW-0441">Lipid A biosynthesis</keyword>
<keyword id="KW-0444">Lipid biosynthesis</keyword>
<keyword id="KW-0443">Lipid metabolism</keyword>
<keyword id="KW-0456">Lyase</keyword>
<evidence type="ECO:0000255" key="1">
    <source>
        <dbReference type="HAMAP-Rule" id="MF_00406"/>
    </source>
</evidence>
<comment type="function">
    <text evidence="1">Involved in unsaturated fatty acids biosynthesis. Catalyzes the dehydration of short chain beta-hydroxyacyl-ACPs and long chain saturated and unsaturated beta-hydroxyacyl-ACPs.</text>
</comment>
<comment type="catalytic activity">
    <reaction evidence="1">
        <text>a (3R)-hydroxyacyl-[ACP] = a (2E)-enoyl-[ACP] + H2O</text>
        <dbReference type="Rhea" id="RHEA:13097"/>
        <dbReference type="Rhea" id="RHEA-COMP:9925"/>
        <dbReference type="Rhea" id="RHEA-COMP:9945"/>
        <dbReference type="ChEBI" id="CHEBI:15377"/>
        <dbReference type="ChEBI" id="CHEBI:78784"/>
        <dbReference type="ChEBI" id="CHEBI:78827"/>
        <dbReference type="EC" id="4.2.1.59"/>
    </reaction>
</comment>
<comment type="subcellular location">
    <subcellularLocation>
        <location evidence="1">Cytoplasm</location>
    </subcellularLocation>
</comment>
<comment type="similarity">
    <text evidence="1">Belongs to the thioester dehydratase family. FabZ subfamily.</text>
</comment>
<feature type="chain" id="PRO_1000049858" description="3-hydroxyacyl-[acyl-carrier-protein] dehydratase FabZ">
    <location>
        <begin position="1"/>
        <end position="145"/>
    </location>
</feature>
<feature type="active site" evidence="1">
    <location>
        <position position="49"/>
    </location>
</feature>
<protein>
    <recommendedName>
        <fullName evidence="1">3-hydroxyacyl-[acyl-carrier-protein] dehydratase FabZ</fullName>
        <ecNumber evidence="1">4.2.1.59</ecNumber>
    </recommendedName>
    <alternativeName>
        <fullName evidence="1">(3R)-hydroxymyristoyl-[acyl-carrier-protein] dehydratase</fullName>
        <shortName evidence="1">(3R)-hydroxymyristoyl-ACP dehydrase</shortName>
    </alternativeName>
    <alternativeName>
        <fullName evidence="1">Beta-hydroxyacyl-ACP dehydratase</fullName>
    </alternativeName>
</protein>
<gene>
    <name evidence="1" type="primary">fabZ</name>
    <name type="ordered locus">A1G_00040</name>
</gene>
<dbReference type="EC" id="4.2.1.59" evidence="1"/>
<dbReference type="EMBL" id="CP000848">
    <property type="protein sequence ID" value="ABV75604.1"/>
    <property type="molecule type" value="Genomic_DNA"/>
</dbReference>
<dbReference type="RefSeq" id="WP_004997000.1">
    <property type="nucleotide sequence ID" value="NC_009882.1"/>
</dbReference>
<dbReference type="SMR" id="A8GQC9"/>
<dbReference type="GeneID" id="79936821"/>
<dbReference type="GeneID" id="95361756"/>
<dbReference type="KEGG" id="rri:A1G_00040"/>
<dbReference type="HOGENOM" id="CLU_078912_1_2_5"/>
<dbReference type="Proteomes" id="UP000006832">
    <property type="component" value="Chromosome"/>
</dbReference>
<dbReference type="GO" id="GO:0005737">
    <property type="term" value="C:cytoplasm"/>
    <property type="evidence" value="ECO:0007669"/>
    <property type="project" value="UniProtKB-SubCell"/>
</dbReference>
<dbReference type="GO" id="GO:0016020">
    <property type="term" value="C:membrane"/>
    <property type="evidence" value="ECO:0007669"/>
    <property type="project" value="GOC"/>
</dbReference>
<dbReference type="GO" id="GO:0019171">
    <property type="term" value="F:(3R)-hydroxyacyl-[acyl-carrier-protein] dehydratase activity"/>
    <property type="evidence" value="ECO:0007669"/>
    <property type="project" value="UniProtKB-EC"/>
</dbReference>
<dbReference type="GO" id="GO:0006633">
    <property type="term" value="P:fatty acid biosynthetic process"/>
    <property type="evidence" value="ECO:0007669"/>
    <property type="project" value="UniProtKB-UniRule"/>
</dbReference>
<dbReference type="GO" id="GO:0009245">
    <property type="term" value="P:lipid A biosynthetic process"/>
    <property type="evidence" value="ECO:0007669"/>
    <property type="project" value="UniProtKB-UniRule"/>
</dbReference>
<dbReference type="CDD" id="cd01288">
    <property type="entry name" value="FabZ"/>
    <property type="match status" value="1"/>
</dbReference>
<dbReference type="FunFam" id="3.10.129.10:FF:000001">
    <property type="entry name" value="3-hydroxyacyl-[acyl-carrier-protein] dehydratase FabZ"/>
    <property type="match status" value="1"/>
</dbReference>
<dbReference type="Gene3D" id="3.10.129.10">
    <property type="entry name" value="Hotdog Thioesterase"/>
    <property type="match status" value="1"/>
</dbReference>
<dbReference type="HAMAP" id="MF_00406">
    <property type="entry name" value="FabZ"/>
    <property type="match status" value="1"/>
</dbReference>
<dbReference type="InterPro" id="IPR013114">
    <property type="entry name" value="FabA_FabZ"/>
</dbReference>
<dbReference type="InterPro" id="IPR010084">
    <property type="entry name" value="FabZ"/>
</dbReference>
<dbReference type="InterPro" id="IPR029069">
    <property type="entry name" value="HotDog_dom_sf"/>
</dbReference>
<dbReference type="NCBIfam" id="TIGR01750">
    <property type="entry name" value="fabZ"/>
    <property type="match status" value="1"/>
</dbReference>
<dbReference type="NCBIfam" id="NF000582">
    <property type="entry name" value="PRK00006.1"/>
    <property type="match status" value="1"/>
</dbReference>
<dbReference type="PANTHER" id="PTHR30272">
    <property type="entry name" value="3-HYDROXYACYL-[ACYL-CARRIER-PROTEIN] DEHYDRATASE"/>
    <property type="match status" value="1"/>
</dbReference>
<dbReference type="PANTHER" id="PTHR30272:SF1">
    <property type="entry name" value="3-HYDROXYACYL-[ACYL-CARRIER-PROTEIN] DEHYDRATASE"/>
    <property type="match status" value="1"/>
</dbReference>
<dbReference type="Pfam" id="PF07977">
    <property type="entry name" value="FabA"/>
    <property type="match status" value="1"/>
</dbReference>
<dbReference type="SUPFAM" id="SSF54637">
    <property type="entry name" value="Thioesterase/thiol ester dehydrase-isomerase"/>
    <property type="match status" value="1"/>
</dbReference>
<organism>
    <name type="scientific">Rickettsia rickettsii (strain Sheila Smith)</name>
    <dbReference type="NCBI Taxonomy" id="392021"/>
    <lineage>
        <taxon>Bacteria</taxon>
        <taxon>Pseudomonadati</taxon>
        <taxon>Pseudomonadota</taxon>
        <taxon>Alphaproteobacteria</taxon>
        <taxon>Rickettsiales</taxon>
        <taxon>Rickettsiaceae</taxon>
        <taxon>Rickettsieae</taxon>
        <taxon>Rickettsia</taxon>
        <taxon>spotted fever group</taxon>
    </lineage>
</organism>
<name>FABZ_RICRS</name>
<reference key="1">
    <citation type="submission" date="2007-09" db="EMBL/GenBank/DDBJ databases">
        <title>Complete genome sequence of Rickettsia rickettsii.</title>
        <authorList>
            <person name="Madan A."/>
            <person name="Fahey J."/>
            <person name="Helton E."/>
            <person name="Ketteman M."/>
            <person name="Madan A."/>
            <person name="Rodrigues S."/>
            <person name="Sanchez A."/>
            <person name="Dasch G."/>
            <person name="Eremeeva M."/>
        </authorList>
    </citation>
    <scope>NUCLEOTIDE SEQUENCE [LARGE SCALE GENOMIC DNA]</scope>
    <source>
        <strain>Sheila Smith</strain>
    </source>
</reference>
<proteinExistence type="inferred from homology"/>
<sequence length="145" mass="16290">MIIDITEIMDWIPHRYPFLLVDRVLKIDPNKSITGIKNVTVNEPQFTGHFPARPVMPGVLMVEAMAQLAAILVAKSLGSTKNKEVFLMTIENAKFRRIVQPGDTMHIHAVIDQQRANVWKFSSTVTVEGEIAAESKFTAMIKDKT</sequence>